<protein>
    <recommendedName>
        <fullName>Altered inheritance of mitochondria protein 21</fullName>
    </recommendedName>
</protein>
<proteinExistence type="inferred from homology"/>
<organism>
    <name type="scientific">Kluyveromyces lactis (strain ATCC 8585 / CBS 2359 / DSM 70799 / NBRC 1267 / NRRL Y-1140 / WM37)</name>
    <name type="common">Yeast</name>
    <name type="synonym">Candida sphaerica</name>
    <dbReference type="NCBI Taxonomy" id="284590"/>
    <lineage>
        <taxon>Eukaryota</taxon>
        <taxon>Fungi</taxon>
        <taxon>Dikarya</taxon>
        <taxon>Ascomycota</taxon>
        <taxon>Saccharomycotina</taxon>
        <taxon>Saccharomycetes</taxon>
        <taxon>Saccharomycetales</taxon>
        <taxon>Saccharomycetaceae</taxon>
        <taxon>Kluyveromyces</taxon>
    </lineage>
</organism>
<sequence length="603" mass="65465">MEQVIPKVPERPRRRITRSEEPEQLRSESEFEREKSGSKDSELDLPPVPKTRPNRKPLASSSAHASSDDVSVKPEPQIQAQLQPEAVIETEPTVEHPIVDELEAKLPVEQPVLDEVELDEPVTQEVEPSGELLPEESTIKESLEEQIIDDFADEPVEEECKEVASPELIGDEAIQDEELEKPVKEEPIIQTDDKTLAEAIVPSVCEESEADIAEEPKETPEDASEAVVEAAREESSEVSPEASPEVPPEKTQVSVDQLSSTANLTEGAKEAPKEEQKETSEATSEETPEDSSVNAKPLFKEVTPGNVSSKEAIPSNTSPKEGSPATQKKKQGKSPPVPKKPSSKIAAFQQMFQNQQLQPEHTPSPKEPAAPKTGGFSGNRAQFAQNLNGMIALPGMAQLTPALAKRLGVSTSSDDAETGAEVETKNTKDEAELPKVPARSKKTRGPHKRLPKTVASIEKVETKSTSNISVVKAWTISFKPDLPERADDQPMEAELTAGEAIAPSEPAGLEDVEAEDLNEASPEEPLQIISESGNSDESEIQHTSDPSIAQNVEHEEEVHEEAEAAPEAEPEAEEIALDTEESNPTAFIAETYDEDTEVETPTA</sequence>
<reference key="1">
    <citation type="journal article" date="2004" name="Nature">
        <title>Genome evolution in yeasts.</title>
        <authorList>
            <person name="Dujon B."/>
            <person name="Sherman D."/>
            <person name="Fischer G."/>
            <person name="Durrens P."/>
            <person name="Casaregola S."/>
            <person name="Lafontaine I."/>
            <person name="de Montigny J."/>
            <person name="Marck C."/>
            <person name="Neuveglise C."/>
            <person name="Talla E."/>
            <person name="Goffard N."/>
            <person name="Frangeul L."/>
            <person name="Aigle M."/>
            <person name="Anthouard V."/>
            <person name="Babour A."/>
            <person name="Barbe V."/>
            <person name="Barnay S."/>
            <person name="Blanchin S."/>
            <person name="Beckerich J.-M."/>
            <person name="Beyne E."/>
            <person name="Bleykasten C."/>
            <person name="Boisrame A."/>
            <person name="Boyer J."/>
            <person name="Cattolico L."/>
            <person name="Confanioleri F."/>
            <person name="de Daruvar A."/>
            <person name="Despons L."/>
            <person name="Fabre E."/>
            <person name="Fairhead C."/>
            <person name="Ferry-Dumazet H."/>
            <person name="Groppi A."/>
            <person name="Hantraye F."/>
            <person name="Hennequin C."/>
            <person name="Jauniaux N."/>
            <person name="Joyet P."/>
            <person name="Kachouri R."/>
            <person name="Kerrest A."/>
            <person name="Koszul R."/>
            <person name="Lemaire M."/>
            <person name="Lesur I."/>
            <person name="Ma L."/>
            <person name="Muller H."/>
            <person name="Nicaud J.-M."/>
            <person name="Nikolski M."/>
            <person name="Oztas S."/>
            <person name="Ozier-Kalogeropoulos O."/>
            <person name="Pellenz S."/>
            <person name="Potier S."/>
            <person name="Richard G.-F."/>
            <person name="Straub M.-L."/>
            <person name="Suleau A."/>
            <person name="Swennen D."/>
            <person name="Tekaia F."/>
            <person name="Wesolowski-Louvel M."/>
            <person name="Westhof E."/>
            <person name="Wirth B."/>
            <person name="Zeniou-Meyer M."/>
            <person name="Zivanovic Y."/>
            <person name="Bolotin-Fukuhara M."/>
            <person name="Thierry A."/>
            <person name="Bouchier C."/>
            <person name="Caudron B."/>
            <person name="Scarpelli C."/>
            <person name="Gaillardin C."/>
            <person name="Weissenbach J."/>
            <person name="Wincker P."/>
            <person name="Souciet J.-L."/>
        </authorList>
    </citation>
    <scope>NUCLEOTIDE SEQUENCE [LARGE SCALE GENOMIC DNA]</scope>
    <source>
        <strain>ATCC 8585 / CBS 2359 / DSM 70799 / NBRC 1267 / NRRL Y-1140 / WM37</strain>
    </source>
</reference>
<keyword id="KW-0963">Cytoplasm</keyword>
<keyword id="KW-0206">Cytoskeleton</keyword>
<keyword id="KW-1185">Reference proteome</keyword>
<name>AIM21_KLULA</name>
<dbReference type="EMBL" id="CR382124">
    <property type="protein sequence ID" value="CAH00760.1"/>
    <property type="molecule type" value="Genomic_DNA"/>
</dbReference>
<dbReference type="RefSeq" id="XP_453664.1">
    <property type="nucleotide sequence ID" value="XM_453664.1"/>
</dbReference>
<dbReference type="STRING" id="284590.Q6CQX5"/>
<dbReference type="PaxDb" id="284590-Q6CQX5"/>
<dbReference type="KEGG" id="kla:KLLA0_D13486g"/>
<dbReference type="eggNOG" id="ENOG502S25J">
    <property type="taxonomic scope" value="Eukaryota"/>
</dbReference>
<dbReference type="HOGENOM" id="CLU_452741_0_0_1"/>
<dbReference type="InParanoid" id="Q6CQX5"/>
<dbReference type="OMA" id="VICERET"/>
<dbReference type="Proteomes" id="UP000000598">
    <property type="component" value="Chromosome D"/>
</dbReference>
<dbReference type="GO" id="GO:0030479">
    <property type="term" value="C:actin cortical patch"/>
    <property type="evidence" value="ECO:0007669"/>
    <property type="project" value="UniProtKB-SubCell"/>
</dbReference>
<dbReference type="InterPro" id="IPR021582">
    <property type="entry name" value="Aim21"/>
</dbReference>
<dbReference type="Pfam" id="PF11489">
    <property type="entry name" value="Aim21"/>
    <property type="match status" value="3"/>
</dbReference>
<gene>
    <name type="primary">AIM21</name>
    <name type="ordered locus">KLLA0D13486g</name>
</gene>
<comment type="function">
    <text evidence="1">Involved in mitochondrial migration along actin filaments.</text>
</comment>
<comment type="subcellular location">
    <subcellularLocation>
        <location evidence="1">Cytoplasm</location>
        <location evidence="1">Cytoskeleton</location>
        <location evidence="1">Actin patch</location>
    </subcellularLocation>
    <text evidence="1">Cortical actin patches.</text>
</comment>
<comment type="similarity">
    <text evidence="3">Belongs to the AIM21 family.</text>
</comment>
<feature type="chain" id="PRO_0000399521" description="Altered inheritance of mitochondria protein 21">
    <location>
        <begin position="1"/>
        <end position="603"/>
    </location>
</feature>
<feature type="region of interest" description="Disordered" evidence="2">
    <location>
        <begin position="1"/>
        <end position="91"/>
    </location>
</feature>
<feature type="region of interest" description="Disordered" evidence="2">
    <location>
        <begin position="163"/>
        <end position="381"/>
    </location>
</feature>
<feature type="region of interest" description="Disordered" evidence="2">
    <location>
        <begin position="407"/>
        <end position="457"/>
    </location>
</feature>
<feature type="region of interest" description="Disordered" evidence="2">
    <location>
        <begin position="478"/>
        <end position="603"/>
    </location>
</feature>
<feature type="compositionally biased region" description="Basic and acidic residues" evidence="2">
    <location>
        <begin position="17"/>
        <end position="42"/>
    </location>
</feature>
<feature type="compositionally biased region" description="Acidic residues" evidence="2">
    <location>
        <begin position="169"/>
        <end position="179"/>
    </location>
</feature>
<feature type="compositionally biased region" description="Basic and acidic residues" evidence="2">
    <location>
        <begin position="180"/>
        <end position="196"/>
    </location>
</feature>
<feature type="compositionally biased region" description="Polar residues" evidence="2">
    <location>
        <begin position="251"/>
        <end position="264"/>
    </location>
</feature>
<feature type="compositionally biased region" description="Basic and acidic residues" evidence="2">
    <location>
        <begin position="267"/>
        <end position="280"/>
    </location>
</feature>
<feature type="compositionally biased region" description="Polar residues" evidence="2">
    <location>
        <begin position="305"/>
        <end position="326"/>
    </location>
</feature>
<feature type="compositionally biased region" description="Low complexity" evidence="2">
    <location>
        <begin position="349"/>
        <end position="358"/>
    </location>
</feature>
<feature type="compositionally biased region" description="Basic and acidic residues" evidence="2">
    <location>
        <begin position="422"/>
        <end position="433"/>
    </location>
</feature>
<feature type="compositionally biased region" description="Basic residues" evidence="2">
    <location>
        <begin position="438"/>
        <end position="451"/>
    </location>
</feature>
<feature type="compositionally biased region" description="Acidic residues" evidence="2">
    <location>
        <begin position="508"/>
        <end position="522"/>
    </location>
</feature>
<feature type="compositionally biased region" description="Polar residues" evidence="2">
    <location>
        <begin position="529"/>
        <end position="550"/>
    </location>
</feature>
<feature type="compositionally biased region" description="Acidic residues" evidence="2">
    <location>
        <begin position="558"/>
        <end position="581"/>
    </location>
</feature>
<feature type="compositionally biased region" description="Acidic residues" evidence="2">
    <location>
        <begin position="591"/>
        <end position="603"/>
    </location>
</feature>
<accession>Q6CQX5</accession>
<evidence type="ECO:0000250" key="1"/>
<evidence type="ECO:0000256" key="2">
    <source>
        <dbReference type="SAM" id="MobiDB-lite"/>
    </source>
</evidence>
<evidence type="ECO:0000305" key="3"/>